<name>UFL1_DROPE</name>
<keyword id="KW-1185">Reference proteome</keyword>
<keyword id="KW-0808">Transferase</keyword>
<keyword id="KW-0833">Ubl conjugation pathway</keyword>
<protein>
    <recommendedName>
        <fullName>E3 UFM1-protein ligase 1 homolog</fullName>
        <ecNumber>2.3.2.-</ecNumber>
    </recommendedName>
    <alternativeName>
        <fullName evidence="3">E3 UFM1-protein transferase 1 homolog</fullName>
    </alternativeName>
</protein>
<feature type="chain" id="PRO_0000391884" description="E3 UFM1-protein ligase 1 homolog">
    <location>
        <begin position="1"/>
        <end position="785"/>
    </location>
</feature>
<feature type="region of interest" description="Disordered" evidence="2">
    <location>
        <begin position="404"/>
        <end position="482"/>
    </location>
</feature>
<dbReference type="EC" id="2.3.2.-"/>
<dbReference type="EMBL" id="CH479182">
    <property type="protein sequence ID" value="EDW34048.1"/>
    <property type="molecule type" value="Genomic_DNA"/>
</dbReference>
<dbReference type="SMR" id="B4GEL3"/>
<dbReference type="STRING" id="7234.B4GEL3"/>
<dbReference type="EnsemblMetazoa" id="FBtr0187649">
    <property type="protein sequence ID" value="FBpp0186141"/>
    <property type="gene ID" value="FBgn0159627"/>
</dbReference>
<dbReference type="EnsemblMetazoa" id="XM_002016912.2">
    <property type="protein sequence ID" value="XP_002016948.1"/>
    <property type="gene ID" value="LOC6591462"/>
</dbReference>
<dbReference type="GeneID" id="6591462"/>
<dbReference type="KEGG" id="dpe:6591462"/>
<dbReference type="CTD" id="23376"/>
<dbReference type="eggNOG" id="KOG2235">
    <property type="taxonomic scope" value="Eukaryota"/>
</dbReference>
<dbReference type="HOGENOM" id="CLU_012417_1_1_1"/>
<dbReference type="OMA" id="CILHASG"/>
<dbReference type="OrthoDB" id="10258297at2759"/>
<dbReference type="PhylomeDB" id="B4GEL3"/>
<dbReference type="Proteomes" id="UP000008744">
    <property type="component" value="Unassembled WGS sequence"/>
</dbReference>
<dbReference type="GO" id="GO:0005789">
    <property type="term" value="C:endoplasmic reticulum membrane"/>
    <property type="evidence" value="ECO:0007669"/>
    <property type="project" value="TreeGrafter"/>
</dbReference>
<dbReference type="GO" id="GO:0061666">
    <property type="term" value="F:UFM1 ligase activity"/>
    <property type="evidence" value="ECO:0007669"/>
    <property type="project" value="EnsemblMetazoa"/>
</dbReference>
<dbReference type="GO" id="GO:1990592">
    <property type="term" value="P:protein K69-linked ufmylation"/>
    <property type="evidence" value="ECO:0007669"/>
    <property type="project" value="TreeGrafter"/>
</dbReference>
<dbReference type="GO" id="GO:0032434">
    <property type="term" value="P:regulation of proteasomal ubiquitin-dependent protein catabolic process"/>
    <property type="evidence" value="ECO:0007669"/>
    <property type="project" value="TreeGrafter"/>
</dbReference>
<dbReference type="GO" id="GO:0034976">
    <property type="term" value="P:response to endoplasmic reticulum stress"/>
    <property type="evidence" value="ECO:0007669"/>
    <property type="project" value="TreeGrafter"/>
</dbReference>
<dbReference type="InterPro" id="IPR018611">
    <property type="entry name" value="Ufl1"/>
</dbReference>
<dbReference type="InterPro" id="IPR056761">
    <property type="entry name" value="Ufl1-like_C"/>
</dbReference>
<dbReference type="InterPro" id="IPR056580">
    <property type="entry name" value="Ufl1_dom"/>
</dbReference>
<dbReference type="InterPro" id="IPR056579">
    <property type="entry name" value="Ufl1_N"/>
</dbReference>
<dbReference type="PANTHER" id="PTHR31057">
    <property type="entry name" value="E3 UFM1-PROTEIN LIGASE 1"/>
    <property type="match status" value="1"/>
</dbReference>
<dbReference type="PANTHER" id="PTHR31057:SF0">
    <property type="entry name" value="E3 UFM1-PROTEIN LIGASE 1"/>
    <property type="match status" value="1"/>
</dbReference>
<dbReference type="Pfam" id="PF09743">
    <property type="entry name" value="E3_UFM1_ligase"/>
    <property type="match status" value="1"/>
</dbReference>
<dbReference type="Pfam" id="PF23659">
    <property type="entry name" value="UFL1"/>
    <property type="match status" value="1"/>
</dbReference>
<dbReference type="Pfam" id="PF25041">
    <property type="entry name" value="UFL1_C"/>
    <property type="match status" value="1"/>
</dbReference>
<evidence type="ECO:0000250" key="1">
    <source>
        <dbReference type="UniProtKB" id="O94874"/>
    </source>
</evidence>
<evidence type="ECO:0000256" key="2">
    <source>
        <dbReference type="SAM" id="MobiDB-lite"/>
    </source>
</evidence>
<evidence type="ECO:0000305" key="3"/>
<organism>
    <name type="scientific">Drosophila persimilis</name>
    <name type="common">Fruit fly</name>
    <dbReference type="NCBI Taxonomy" id="7234"/>
    <lineage>
        <taxon>Eukaryota</taxon>
        <taxon>Metazoa</taxon>
        <taxon>Ecdysozoa</taxon>
        <taxon>Arthropoda</taxon>
        <taxon>Hexapoda</taxon>
        <taxon>Insecta</taxon>
        <taxon>Pterygota</taxon>
        <taxon>Neoptera</taxon>
        <taxon>Endopterygota</taxon>
        <taxon>Diptera</taxon>
        <taxon>Brachycera</taxon>
        <taxon>Muscomorpha</taxon>
        <taxon>Ephydroidea</taxon>
        <taxon>Drosophilidae</taxon>
        <taxon>Drosophila</taxon>
        <taxon>Sophophora</taxon>
    </lineage>
</organism>
<accession>B4GEL3</accession>
<reference key="1">
    <citation type="journal article" date="2007" name="Nature">
        <title>Evolution of genes and genomes on the Drosophila phylogeny.</title>
        <authorList>
            <consortium name="Drosophila 12 genomes consortium"/>
        </authorList>
    </citation>
    <scope>NUCLEOTIDE SEQUENCE [LARGE SCALE GENOMIC DNA]</scope>
    <source>
        <strain>MSH-3 / Tucson 14011-0111.49</strain>
    </source>
</reference>
<comment type="function">
    <text evidence="1">E3 UFM1-protein ligase that mediates ufmylation of target proteins.</text>
</comment>
<comment type="similarity">
    <text evidence="3">Belongs to the UFL1 family.</text>
</comment>
<gene>
    <name type="ORF">GL22034</name>
</gene>
<sequence>MGSDWDEIKRLAADFQKAQLTSTLQKLSERNCVEIVTLLLEKQLLEVVFTNDGKEYITPDHLEREIQDELYANGGRANLVEVSRTLNVDLSRIVALAERIAAENPLVHLVLGQLIDEDYISHIAQEINEKLALRGEISISDLASQFDLPSEFLQQDVVEKHLGKIIKGRQDATNPRVFFTQAYIQRCKAKIRGALAAITRPTNVAVILQQINVQEKIFHSLLDEISPAGQVTSKLANAQYVPHIYAKTQADWVNSFYKQNSFLEYDAINKLGISDAKSYIRKQFPNEEFLFLKRVALGARLVELTVVTALNECSATKQYLDLTTILPSNLSEEDIEEVFSAIMAQKHSNPSNFVYLDSIVFSQPYLTELVQPCHALAEAQAKAAIDSGVYQQFIVEKTLAQKGNASFQDQDDDGKLDKRDERRKKASSGKAGGGAQGRETKTKSTKKHQRRSAAAQNDSDVEDDVQHQGSRGAGGGGGNKKTVKPLDLVKTADIEKLINASLQEEGLEHLAPSIAALYLNQLNQAALAKAQELYEATPQTNRRQTHAAIQDRINTLLIDIRLYEKGLKLFSHDTQTQLVKYLLKSLGNDICNELSLYVASECNLTVKNTSLNVDQRIKLAQECDAEYRSALLEQNKALNKSIDDFELATESVLKACSMIIKKVDKKKDRLLIADHKNKLQQQLLDCQEPALLLHLAALILFTTISGCILHASGKFVSAILQHIRGSLSDPQNDMLLRYHDLVLQVLQTAPESDDSKMAHEQLQIMQSKVVELAQNYTRASVSKAD</sequence>
<proteinExistence type="inferred from homology"/>